<dbReference type="EMBL" id="BT021820">
    <property type="protein sequence ID" value="AAX46667.1"/>
    <property type="molecule type" value="mRNA"/>
</dbReference>
<dbReference type="RefSeq" id="NP_001030572.1">
    <property type="nucleotide sequence ID" value="NM_001035495.1"/>
</dbReference>
<dbReference type="FunCoup" id="Q58CX7">
    <property type="interactions" value="101"/>
</dbReference>
<dbReference type="STRING" id="9913.ENSBTAP00000027608"/>
<dbReference type="GlyCosmos" id="Q58CX7">
    <property type="glycosylation" value="1 site, No reported glycans"/>
</dbReference>
<dbReference type="GlyGen" id="Q58CX7">
    <property type="glycosylation" value="1 site"/>
</dbReference>
<dbReference type="PaxDb" id="9913-ENSBTAP00000027608"/>
<dbReference type="GeneID" id="617391"/>
<dbReference type="KEGG" id="bta:617391"/>
<dbReference type="CTD" id="79742"/>
<dbReference type="eggNOG" id="ENOG502QRQX">
    <property type="taxonomic scope" value="Eukaryota"/>
</dbReference>
<dbReference type="InParanoid" id="Q58CX7"/>
<dbReference type="OrthoDB" id="10035316at2759"/>
<dbReference type="Proteomes" id="UP000009136">
    <property type="component" value="Unplaced"/>
</dbReference>
<dbReference type="GO" id="GO:0005576">
    <property type="term" value="C:extracellular region"/>
    <property type="evidence" value="ECO:0007669"/>
    <property type="project" value="UniProtKB-SubCell"/>
</dbReference>
<dbReference type="InterPro" id="IPR020519">
    <property type="entry name" value="DIPK2A/B"/>
</dbReference>
<dbReference type="InterPro" id="IPR022049">
    <property type="entry name" value="FAM69_kinase_dom"/>
</dbReference>
<dbReference type="PANTHER" id="PTHR32073:SF8">
    <property type="entry name" value="DIVERGENT PROTEIN KINASE DOMAIN 2B"/>
    <property type="match status" value="1"/>
</dbReference>
<dbReference type="PANTHER" id="PTHR32073">
    <property type="entry name" value="GH11358P"/>
    <property type="match status" value="1"/>
</dbReference>
<dbReference type="Pfam" id="PF12260">
    <property type="entry name" value="PIP49_C"/>
    <property type="match status" value="1"/>
</dbReference>
<proteinExistence type="evidence at transcript level"/>
<accession>Q58CX7</accession>
<keyword id="KW-0325">Glycoprotein</keyword>
<keyword id="KW-1185">Reference proteome</keyword>
<keyword id="KW-0964">Secreted</keyword>
<keyword id="KW-0732">Signal</keyword>
<name>DIK2B_BOVIN</name>
<feature type="signal peptide" evidence="1">
    <location>
        <begin position="1"/>
        <end position="29"/>
    </location>
</feature>
<feature type="chain" id="PRO_0000353114" description="Divergent protein kinase domain 2B">
    <location>
        <begin position="30"/>
        <end position="433"/>
    </location>
</feature>
<feature type="glycosylation site" description="N-linked (GlcNAc...) asparagine" evidence="1">
    <location>
        <position position="100"/>
    </location>
</feature>
<comment type="subcellular location">
    <subcellularLocation>
        <location evidence="2">Secreted</location>
    </subcellularLocation>
</comment>
<comment type="similarity">
    <text evidence="2">Belongs to the DIPK family.</text>
</comment>
<protein>
    <recommendedName>
        <fullName evidence="2">Divergent protein kinase domain 2B</fullName>
    </recommendedName>
    <alternativeName>
        <fullName>Deleted in autism-related protein 1 homolog</fullName>
    </alternativeName>
</protein>
<gene>
    <name type="primary">DIPK2B</name>
</gene>
<evidence type="ECO:0000255" key="1"/>
<evidence type="ECO:0000305" key="2"/>
<sequence length="433" mass="48095">MEPRLGPKAAALHLGWPFLLLWVSGLSYSVSSPASPSPSPVSRVRTSYNLGKTFLGLDKCNACIGTSICKKFFKEEIRFDNGLALHLGPPPDDLPSYSANYSDDFKTWRPVEISRLVSKQQNKISDGRICASAAAPKTCSIERVLRKTGRFQKWLQAKRLTPDLVRGLSSPLLRCPSQRLLDRVVRRYAEVADAGSIFMDHFTDRDKLRLLYTLAVNTHPVLLQIFPGAEGWPLPQYLGSCGRFLVSTSTSPLQEFYGAPPDQAADLAYQLLGVLESLRSNDLNYFFYFTHVDADMFGIFNNGHLFIRDASALGVIDRQEGSQAASGAGDNKDIFSCLVSGCQTKLPSCDTIPEKQNLVLVCSQVLPLLLQAKFPSPVQEEIDAELTRCADGTRPDPEVLGAASRLKDILRPLRTCDPRFAYRYPDCKYDDKF</sequence>
<reference key="1">
    <citation type="journal article" date="2005" name="BMC Genomics">
        <title>Characterization of 954 bovine full-CDS cDNA sequences.</title>
        <authorList>
            <person name="Harhay G.P."/>
            <person name="Sonstegard T.S."/>
            <person name="Keele J.W."/>
            <person name="Heaton M.P."/>
            <person name="Clawson M.L."/>
            <person name="Snelling W.M."/>
            <person name="Wiedmann R.T."/>
            <person name="Van Tassell C.P."/>
            <person name="Smith T.P.L."/>
        </authorList>
    </citation>
    <scope>NUCLEOTIDE SEQUENCE [LARGE SCALE MRNA]</scope>
</reference>
<organism>
    <name type="scientific">Bos taurus</name>
    <name type="common">Bovine</name>
    <dbReference type="NCBI Taxonomy" id="9913"/>
    <lineage>
        <taxon>Eukaryota</taxon>
        <taxon>Metazoa</taxon>
        <taxon>Chordata</taxon>
        <taxon>Craniata</taxon>
        <taxon>Vertebrata</taxon>
        <taxon>Euteleostomi</taxon>
        <taxon>Mammalia</taxon>
        <taxon>Eutheria</taxon>
        <taxon>Laurasiatheria</taxon>
        <taxon>Artiodactyla</taxon>
        <taxon>Ruminantia</taxon>
        <taxon>Pecora</taxon>
        <taxon>Bovidae</taxon>
        <taxon>Bovinae</taxon>
        <taxon>Bos</taxon>
    </lineage>
</organism>